<sequence>MNIFNYTTLIFRRLSSTFKASNKASIEWKKQNIAVKRKIGGYWNPKKKLPLESMDEIRRLKKEKSSMSCSELAKLYGVSPESIRRILKSSNRPLDDREKSRKEKRWLNSLKSNRDFA</sequence>
<keyword id="KW-0963">Cytoplasm</keyword>
<keyword id="KW-0496">Mitochondrion</keyword>
<keyword id="KW-0539">Nucleus</keyword>
<keyword id="KW-1185">Reference proteome</keyword>
<keyword id="KW-0809">Transit peptide</keyword>
<evidence type="ECO:0000250" key="1"/>
<evidence type="ECO:0000255" key="2"/>
<evidence type="ECO:0000256" key="3">
    <source>
        <dbReference type="SAM" id="MobiDB-lite"/>
    </source>
</evidence>
<evidence type="ECO:0000269" key="4">
    <source>
    </source>
</evidence>
<evidence type="ECO:0000305" key="5"/>
<protein>
    <recommendedName>
        <fullName>Required for respiratory growth protein 9, mitochondrial</fullName>
    </recommendedName>
</protein>
<reference key="1">
    <citation type="journal article" date="2002" name="Nature">
        <title>The genome sequence of Schizosaccharomyces pombe.</title>
        <authorList>
            <person name="Wood V."/>
            <person name="Gwilliam R."/>
            <person name="Rajandream M.A."/>
            <person name="Lyne M.H."/>
            <person name="Lyne R."/>
            <person name="Stewart A."/>
            <person name="Sgouros J.G."/>
            <person name="Peat N."/>
            <person name="Hayles J."/>
            <person name="Baker S.G."/>
            <person name="Basham D."/>
            <person name="Bowman S."/>
            <person name="Brooks K."/>
            <person name="Brown D."/>
            <person name="Brown S."/>
            <person name="Chillingworth T."/>
            <person name="Churcher C.M."/>
            <person name="Collins M."/>
            <person name="Connor R."/>
            <person name="Cronin A."/>
            <person name="Davis P."/>
            <person name="Feltwell T."/>
            <person name="Fraser A."/>
            <person name="Gentles S."/>
            <person name="Goble A."/>
            <person name="Hamlin N."/>
            <person name="Harris D.E."/>
            <person name="Hidalgo J."/>
            <person name="Hodgson G."/>
            <person name="Holroyd S."/>
            <person name="Hornsby T."/>
            <person name="Howarth S."/>
            <person name="Huckle E.J."/>
            <person name="Hunt S."/>
            <person name="Jagels K."/>
            <person name="James K.D."/>
            <person name="Jones L."/>
            <person name="Jones M."/>
            <person name="Leather S."/>
            <person name="McDonald S."/>
            <person name="McLean J."/>
            <person name="Mooney P."/>
            <person name="Moule S."/>
            <person name="Mungall K.L."/>
            <person name="Murphy L.D."/>
            <person name="Niblett D."/>
            <person name="Odell C."/>
            <person name="Oliver K."/>
            <person name="O'Neil S."/>
            <person name="Pearson D."/>
            <person name="Quail M.A."/>
            <person name="Rabbinowitsch E."/>
            <person name="Rutherford K.M."/>
            <person name="Rutter S."/>
            <person name="Saunders D."/>
            <person name="Seeger K."/>
            <person name="Sharp S."/>
            <person name="Skelton J."/>
            <person name="Simmonds M.N."/>
            <person name="Squares R."/>
            <person name="Squares S."/>
            <person name="Stevens K."/>
            <person name="Taylor K."/>
            <person name="Taylor R.G."/>
            <person name="Tivey A."/>
            <person name="Walsh S.V."/>
            <person name="Warren T."/>
            <person name="Whitehead S."/>
            <person name="Woodward J.R."/>
            <person name="Volckaert G."/>
            <person name="Aert R."/>
            <person name="Robben J."/>
            <person name="Grymonprez B."/>
            <person name="Weltjens I."/>
            <person name="Vanstreels E."/>
            <person name="Rieger M."/>
            <person name="Schaefer M."/>
            <person name="Mueller-Auer S."/>
            <person name="Gabel C."/>
            <person name="Fuchs M."/>
            <person name="Duesterhoeft A."/>
            <person name="Fritzc C."/>
            <person name="Holzer E."/>
            <person name="Moestl D."/>
            <person name="Hilbert H."/>
            <person name="Borzym K."/>
            <person name="Langer I."/>
            <person name="Beck A."/>
            <person name="Lehrach H."/>
            <person name="Reinhardt R."/>
            <person name="Pohl T.M."/>
            <person name="Eger P."/>
            <person name="Zimmermann W."/>
            <person name="Wedler H."/>
            <person name="Wambutt R."/>
            <person name="Purnelle B."/>
            <person name="Goffeau A."/>
            <person name="Cadieu E."/>
            <person name="Dreano S."/>
            <person name="Gloux S."/>
            <person name="Lelaure V."/>
            <person name="Mottier S."/>
            <person name="Galibert F."/>
            <person name="Aves S.J."/>
            <person name="Xiang Z."/>
            <person name="Hunt C."/>
            <person name="Moore K."/>
            <person name="Hurst S.M."/>
            <person name="Lucas M."/>
            <person name="Rochet M."/>
            <person name="Gaillardin C."/>
            <person name="Tallada V.A."/>
            <person name="Garzon A."/>
            <person name="Thode G."/>
            <person name="Daga R.R."/>
            <person name="Cruzado L."/>
            <person name="Jimenez J."/>
            <person name="Sanchez M."/>
            <person name="del Rey F."/>
            <person name="Benito J."/>
            <person name="Dominguez A."/>
            <person name="Revuelta J.L."/>
            <person name="Moreno S."/>
            <person name="Armstrong J."/>
            <person name="Forsburg S.L."/>
            <person name="Cerutti L."/>
            <person name="Lowe T."/>
            <person name="McCombie W.R."/>
            <person name="Paulsen I."/>
            <person name="Potashkin J."/>
            <person name="Shpakovski G.V."/>
            <person name="Ussery D."/>
            <person name="Barrell B.G."/>
            <person name="Nurse P."/>
        </authorList>
    </citation>
    <scope>NUCLEOTIDE SEQUENCE [LARGE SCALE GENOMIC DNA]</scope>
    <source>
        <strain>972 / ATCC 24843</strain>
    </source>
</reference>
<reference key="2">
    <citation type="submission" date="2004-04" db="EMBL/GenBank/DDBJ databases">
        <authorList>
            <person name="Gentles S."/>
            <person name="Churcher C.M."/>
            <person name="Barrell B.G."/>
            <person name="Rajandream M.A."/>
            <person name="Wood V."/>
        </authorList>
    </citation>
    <scope>SEQUENCE REVISION TO N-TERMINUS</scope>
</reference>
<reference key="3">
    <citation type="journal article" date="2006" name="Nat. Biotechnol.">
        <title>ORFeome cloning and global analysis of protein localization in the fission yeast Schizosaccharomyces pombe.</title>
        <authorList>
            <person name="Matsuyama A."/>
            <person name="Arai R."/>
            <person name="Yashiroda Y."/>
            <person name="Shirai A."/>
            <person name="Kamata A."/>
            <person name="Sekido S."/>
            <person name="Kobayashi Y."/>
            <person name="Hashimoto A."/>
            <person name="Hamamoto M."/>
            <person name="Hiraoka Y."/>
            <person name="Horinouchi S."/>
            <person name="Yoshida M."/>
        </authorList>
    </citation>
    <scope>SUBCELLULAR LOCATION [LARGE SCALE ANALYSIS]</scope>
</reference>
<comment type="function">
    <text evidence="1">Required for respiratory activity and maintenance and expression of the mitochondrial genome.</text>
</comment>
<comment type="subcellular location">
    <subcellularLocation>
        <location evidence="1">Mitochondrion</location>
    </subcellularLocation>
    <subcellularLocation>
        <location evidence="4">Cytoplasm</location>
    </subcellularLocation>
    <subcellularLocation>
        <location evidence="4">Nucleus</location>
    </subcellularLocation>
</comment>
<comment type="similarity">
    <text evidence="5">Belongs to the RRG9 family.</text>
</comment>
<dbReference type="EMBL" id="CU329670">
    <property type="protein sequence ID" value="CAB11068.2"/>
    <property type="molecule type" value="Genomic_DNA"/>
</dbReference>
<dbReference type="PIR" id="T39013">
    <property type="entry name" value="T39013"/>
</dbReference>
<dbReference type="RefSeq" id="NP_593761.2">
    <property type="nucleotide sequence ID" value="NM_001019191.2"/>
</dbReference>
<dbReference type="SMR" id="O14211"/>
<dbReference type="BioGRID" id="279672">
    <property type="interactions" value="50"/>
</dbReference>
<dbReference type="FunCoup" id="O14211">
    <property type="interactions" value="270"/>
</dbReference>
<dbReference type="PaxDb" id="4896-SPAC6B12.06c.1"/>
<dbReference type="EnsemblFungi" id="SPAC6B12.06c.1">
    <property type="protein sequence ID" value="SPAC6B12.06c.1:pep"/>
    <property type="gene ID" value="SPAC6B12.06c"/>
</dbReference>
<dbReference type="GeneID" id="2543244"/>
<dbReference type="KEGG" id="spo:2543244"/>
<dbReference type="PomBase" id="SPAC6B12.06c">
    <property type="gene designation" value="rrg9"/>
</dbReference>
<dbReference type="VEuPathDB" id="FungiDB:SPAC6B12.06c"/>
<dbReference type="eggNOG" id="ENOG502S7IA">
    <property type="taxonomic scope" value="Eukaryota"/>
</dbReference>
<dbReference type="HOGENOM" id="CLU_2086174_0_0_1"/>
<dbReference type="InParanoid" id="O14211"/>
<dbReference type="PhylomeDB" id="O14211"/>
<dbReference type="PRO" id="PR:O14211"/>
<dbReference type="Proteomes" id="UP000002485">
    <property type="component" value="Chromosome I"/>
</dbReference>
<dbReference type="GO" id="GO:0005829">
    <property type="term" value="C:cytosol"/>
    <property type="evidence" value="ECO:0007005"/>
    <property type="project" value="PomBase"/>
</dbReference>
<dbReference type="GO" id="GO:0005739">
    <property type="term" value="C:mitochondrion"/>
    <property type="evidence" value="ECO:0000250"/>
    <property type="project" value="PomBase"/>
</dbReference>
<dbReference type="GO" id="GO:0005634">
    <property type="term" value="C:nucleus"/>
    <property type="evidence" value="ECO:0007005"/>
    <property type="project" value="PomBase"/>
</dbReference>
<dbReference type="GO" id="GO:0061668">
    <property type="term" value="P:mitochondrial ribosome assembly"/>
    <property type="evidence" value="ECO:0000250"/>
    <property type="project" value="PomBase"/>
</dbReference>
<dbReference type="InterPro" id="IPR010487">
    <property type="entry name" value="NGRN/Rrg9"/>
</dbReference>
<dbReference type="PANTHER" id="PTHR13475">
    <property type="entry name" value="NEUGRIN"/>
    <property type="match status" value="1"/>
</dbReference>
<dbReference type="PANTHER" id="PTHR13475:SF3">
    <property type="entry name" value="NEUGRIN"/>
    <property type="match status" value="1"/>
</dbReference>
<dbReference type="Pfam" id="PF06413">
    <property type="entry name" value="Neugrin"/>
    <property type="match status" value="1"/>
</dbReference>
<name>RRG9_SCHPO</name>
<gene>
    <name type="primary">rrg9</name>
    <name type="ORF">SPAC6B12.06c</name>
</gene>
<proteinExistence type="inferred from homology"/>
<organism>
    <name type="scientific">Schizosaccharomyces pombe (strain 972 / ATCC 24843)</name>
    <name type="common">Fission yeast</name>
    <dbReference type="NCBI Taxonomy" id="284812"/>
    <lineage>
        <taxon>Eukaryota</taxon>
        <taxon>Fungi</taxon>
        <taxon>Dikarya</taxon>
        <taxon>Ascomycota</taxon>
        <taxon>Taphrinomycotina</taxon>
        <taxon>Schizosaccharomycetes</taxon>
        <taxon>Schizosaccharomycetales</taxon>
        <taxon>Schizosaccharomycetaceae</taxon>
        <taxon>Schizosaccharomyces</taxon>
    </lineage>
</organism>
<accession>O14211</accession>
<feature type="transit peptide" description="Mitochondrion" evidence="2">
    <location>
        <begin position="1"/>
        <end position="46"/>
    </location>
</feature>
<feature type="chain" id="PRO_0000116665" description="Required for respiratory growth protein 9, mitochondrial">
    <location>
        <begin position="47"/>
        <end position="117"/>
    </location>
</feature>
<feature type="region of interest" description="Disordered" evidence="3">
    <location>
        <begin position="89"/>
        <end position="117"/>
    </location>
</feature>